<name>GSTCD_DROME</name>
<gene>
    <name type="ORF">CG10428</name>
</gene>
<evidence type="ECO:0000305" key="1"/>
<feature type="chain" id="PRO_0000316957" description="Glutathione S-transferase C-terminal domain-containing protein homolog">
    <location>
        <begin position="1"/>
        <end position="585"/>
    </location>
</feature>
<feature type="domain" description="GST C-terminal">
    <location>
        <begin position="120"/>
        <end position="275"/>
    </location>
</feature>
<organism>
    <name type="scientific">Drosophila melanogaster</name>
    <name type="common">Fruit fly</name>
    <dbReference type="NCBI Taxonomy" id="7227"/>
    <lineage>
        <taxon>Eukaryota</taxon>
        <taxon>Metazoa</taxon>
        <taxon>Ecdysozoa</taxon>
        <taxon>Arthropoda</taxon>
        <taxon>Hexapoda</taxon>
        <taxon>Insecta</taxon>
        <taxon>Pterygota</taxon>
        <taxon>Neoptera</taxon>
        <taxon>Endopterygota</taxon>
        <taxon>Diptera</taxon>
        <taxon>Brachycera</taxon>
        <taxon>Muscomorpha</taxon>
        <taxon>Ephydroidea</taxon>
        <taxon>Drosophilidae</taxon>
        <taxon>Drosophila</taxon>
        <taxon>Sophophora</taxon>
    </lineage>
</organism>
<comment type="similarity">
    <text evidence="1">Belongs to the GSTCD family.</text>
</comment>
<protein>
    <recommendedName>
        <fullName>Glutathione S-transferase C-terminal domain-containing protein homolog</fullName>
    </recommendedName>
</protein>
<keyword id="KW-1185">Reference proteome</keyword>
<sequence length="585" mass="66005">MDQLYLEIEISTQKETTIYTGVSSFLALFTYKFLKDPKNVRVNFVSTKIEGGKIALRSSQLKKELTDRHITCRDAASLPAIQDLKLPIYEKDGNTFIAGTCAVCRELIARQPNEELKKLLGFKGSCLLAPSEASIWTKFCEVDLVAVVSKLHSGQVLEFVPQEVVRFEQHMNEPVRMHNIYKQAREQANQTENGGKVKRRERVQIKCTTPKEELLIEHRFAEGISFTIADIILYPLLRIVFQHCGQMLPHFPLTSTWFSEIDSFGDKCARVLRDLYVPQAIKTPPGELGIPDCEATSLYKADPKRYKPRNRIYTSQLELEAALSKLSSLQLQFNSDSEHTYGQQLIDWEQIEPTHAKSSALPKERLERKRQQLENLANAVVSLAQPGDRIVDFCSGTGHLAILLALKLPNCTIIVMENKAFSLLQAQKRSNELGLTNCVFYQCNIDYFVGGFKIGASLHACGTATDIVLQQCRRAKAHFVCCPCCYGSLQPMPHISYPLSKAFQKVLDTKDYLYIAHSADQAHEMGTTNCKPETTLQGLHCMSVVDTDRLLQAEEAGYQVILTRLKPEQCTPKNHLLVGRFVKQN</sequence>
<dbReference type="EMBL" id="AE014134">
    <property type="protein sequence ID" value="AAF53723.2"/>
    <property type="molecule type" value="Genomic_DNA"/>
</dbReference>
<dbReference type="EMBL" id="AY058604">
    <property type="protein sequence ID" value="AAL13833.1"/>
    <property type="molecule type" value="mRNA"/>
</dbReference>
<dbReference type="RefSeq" id="NP_609918.1">
    <property type="nucleotide sequence ID" value="NM_136074.4"/>
</dbReference>
<dbReference type="BioGRID" id="61141">
    <property type="interactions" value="3"/>
</dbReference>
<dbReference type="FunCoup" id="Q9VJ34">
    <property type="interactions" value="1860"/>
</dbReference>
<dbReference type="IntAct" id="Q9VJ34">
    <property type="interactions" value="6"/>
</dbReference>
<dbReference type="STRING" id="7227.FBpp0080676"/>
<dbReference type="PaxDb" id="7227-FBpp0080676"/>
<dbReference type="DNASU" id="35150"/>
<dbReference type="EnsemblMetazoa" id="FBtr0081132">
    <property type="protein sequence ID" value="FBpp0080676"/>
    <property type="gene ID" value="FBgn0032724"/>
</dbReference>
<dbReference type="GeneID" id="35150"/>
<dbReference type="KEGG" id="dme:Dmel_CG10428"/>
<dbReference type="UCSC" id="CG10428-RA">
    <property type="organism name" value="d. melanogaster"/>
</dbReference>
<dbReference type="AGR" id="FB:FBgn0032724"/>
<dbReference type="FlyBase" id="FBgn0032724">
    <property type="gene designation" value="CG10428"/>
</dbReference>
<dbReference type="VEuPathDB" id="VectorBase:FBgn0032724"/>
<dbReference type="eggNOG" id="ENOG502QUFE">
    <property type="taxonomic scope" value="Eukaryota"/>
</dbReference>
<dbReference type="GeneTree" id="ENSGT00390000004446"/>
<dbReference type="HOGENOM" id="CLU_013673_1_0_1"/>
<dbReference type="InParanoid" id="Q9VJ34"/>
<dbReference type="OMA" id="WTRFCEV"/>
<dbReference type="OrthoDB" id="206598at2759"/>
<dbReference type="PhylomeDB" id="Q9VJ34"/>
<dbReference type="BioGRID-ORCS" id="35150">
    <property type="hits" value="0 hits in 1 CRISPR screen"/>
</dbReference>
<dbReference type="ChiTaRS" id="CG10428">
    <property type="organism name" value="fly"/>
</dbReference>
<dbReference type="GenomeRNAi" id="35150"/>
<dbReference type="PRO" id="PR:Q9VJ34"/>
<dbReference type="Proteomes" id="UP000000803">
    <property type="component" value="Chromosome 2L"/>
</dbReference>
<dbReference type="Bgee" id="FBgn0032724">
    <property type="expression patterns" value="Expressed in eye disc (Drosophila) and 85 other cell types or tissues"/>
</dbReference>
<dbReference type="GO" id="GO:0005737">
    <property type="term" value="C:cytoplasm"/>
    <property type="evidence" value="ECO:0000318"/>
    <property type="project" value="GO_Central"/>
</dbReference>
<dbReference type="CDD" id="cd00299">
    <property type="entry name" value="GST_C_family"/>
    <property type="match status" value="1"/>
</dbReference>
<dbReference type="FunFam" id="3.40.50.150:FF:000623">
    <property type="entry name" value="Glutathione S-transferase C-terminal domain-containing protein homolog"/>
    <property type="match status" value="1"/>
</dbReference>
<dbReference type="Gene3D" id="3.40.50.150">
    <property type="entry name" value="Vaccinia Virus protein VP39"/>
    <property type="match status" value="1"/>
</dbReference>
<dbReference type="InterPro" id="IPR036282">
    <property type="entry name" value="Glutathione-S-Trfase_C_sf"/>
</dbReference>
<dbReference type="InterPro" id="IPR025714">
    <property type="entry name" value="Methyltranfer_dom"/>
</dbReference>
<dbReference type="InterPro" id="IPR029063">
    <property type="entry name" value="SAM-dependent_MTases_sf"/>
</dbReference>
<dbReference type="PANTHER" id="PTHR13369">
    <property type="match status" value="1"/>
</dbReference>
<dbReference type="PANTHER" id="PTHR13369:SF0">
    <property type="entry name" value="GLUTATHIONE S-TRANSFERASE C-TERMINAL DOMAIN-CONTAINING PROTEIN"/>
    <property type="match status" value="1"/>
</dbReference>
<dbReference type="Pfam" id="PF13679">
    <property type="entry name" value="Methyltransf_32"/>
    <property type="match status" value="1"/>
</dbReference>
<dbReference type="SUPFAM" id="SSF47616">
    <property type="entry name" value="GST C-terminal domain-like"/>
    <property type="match status" value="1"/>
</dbReference>
<dbReference type="SUPFAM" id="SSF53335">
    <property type="entry name" value="S-adenosyl-L-methionine-dependent methyltransferases"/>
    <property type="match status" value="1"/>
</dbReference>
<accession>Q9VJ34</accession>
<accession>Q95TQ9</accession>
<proteinExistence type="evidence at transcript level"/>
<reference key="1">
    <citation type="journal article" date="2000" name="Science">
        <title>The genome sequence of Drosophila melanogaster.</title>
        <authorList>
            <person name="Adams M.D."/>
            <person name="Celniker S.E."/>
            <person name="Holt R.A."/>
            <person name="Evans C.A."/>
            <person name="Gocayne J.D."/>
            <person name="Amanatides P.G."/>
            <person name="Scherer S.E."/>
            <person name="Li P.W."/>
            <person name="Hoskins R.A."/>
            <person name="Galle R.F."/>
            <person name="George R.A."/>
            <person name="Lewis S.E."/>
            <person name="Richards S."/>
            <person name="Ashburner M."/>
            <person name="Henderson S.N."/>
            <person name="Sutton G.G."/>
            <person name="Wortman J.R."/>
            <person name="Yandell M.D."/>
            <person name="Zhang Q."/>
            <person name="Chen L.X."/>
            <person name="Brandon R.C."/>
            <person name="Rogers Y.-H.C."/>
            <person name="Blazej R.G."/>
            <person name="Champe M."/>
            <person name="Pfeiffer B.D."/>
            <person name="Wan K.H."/>
            <person name="Doyle C."/>
            <person name="Baxter E.G."/>
            <person name="Helt G."/>
            <person name="Nelson C.R."/>
            <person name="Miklos G.L.G."/>
            <person name="Abril J.F."/>
            <person name="Agbayani A."/>
            <person name="An H.-J."/>
            <person name="Andrews-Pfannkoch C."/>
            <person name="Baldwin D."/>
            <person name="Ballew R.M."/>
            <person name="Basu A."/>
            <person name="Baxendale J."/>
            <person name="Bayraktaroglu L."/>
            <person name="Beasley E.M."/>
            <person name="Beeson K.Y."/>
            <person name="Benos P.V."/>
            <person name="Berman B.P."/>
            <person name="Bhandari D."/>
            <person name="Bolshakov S."/>
            <person name="Borkova D."/>
            <person name="Botchan M.R."/>
            <person name="Bouck J."/>
            <person name="Brokstein P."/>
            <person name="Brottier P."/>
            <person name="Burtis K.C."/>
            <person name="Busam D.A."/>
            <person name="Butler H."/>
            <person name="Cadieu E."/>
            <person name="Center A."/>
            <person name="Chandra I."/>
            <person name="Cherry J.M."/>
            <person name="Cawley S."/>
            <person name="Dahlke C."/>
            <person name="Davenport L.B."/>
            <person name="Davies P."/>
            <person name="de Pablos B."/>
            <person name="Delcher A."/>
            <person name="Deng Z."/>
            <person name="Mays A.D."/>
            <person name="Dew I."/>
            <person name="Dietz S.M."/>
            <person name="Dodson K."/>
            <person name="Doup L.E."/>
            <person name="Downes M."/>
            <person name="Dugan-Rocha S."/>
            <person name="Dunkov B.C."/>
            <person name="Dunn P."/>
            <person name="Durbin K.J."/>
            <person name="Evangelista C.C."/>
            <person name="Ferraz C."/>
            <person name="Ferriera S."/>
            <person name="Fleischmann W."/>
            <person name="Fosler C."/>
            <person name="Gabrielian A.E."/>
            <person name="Garg N.S."/>
            <person name="Gelbart W.M."/>
            <person name="Glasser K."/>
            <person name="Glodek A."/>
            <person name="Gong F."/>
            <person name="Gorrell J.H."/>
            <person name="Gu Z."/>
            <person name="Guan P."/>
            <person name="Harris M."/>
            <person name="Harris N.L."/>
            <person name="Harvey D.A."/>
            <person name="Heiman T.J."/>
            <person name="Hernandez J.R."/>
            <person name="Houck J."/>
            <person name="Hostin D."/>
            <person name="Houston K.A."/>
            <person name="Howland T.J."/>
            <person name="Wei M.-H."/>
            <person name="Ibegwam C."/>
            <person name="Jalali M."/>
            <person name="Kalush F."/>
            <person name="Karpen G.H."/>
            <person name="Ke Z."/>
            <person name="Kennison J.A."/>
            <person name="Ketchum K.A."/>
            <person name="Kimmel B.E."/>
            <person name="Kodira C.D."/>
            <person name="Kraft C.L."/>
            <person name="Kravitz S."/>
            <person name="Kulp D."/>
            <person name="Lai Z."/>
            <person name="Lasko P."/>
            <person name="Lei Y."/>
            <person name="Levitsky A.A."/>
            <person name="Li J.H."/>
            <person name="Li Z."/>
            <person name="Liang Y."/>
            <person name="Lin X."/>
            <person name="Liu X."/>
            <person name="Mattei B."/>
            <person name="McIntosh T.C."/>
            <person name="McLeod M.P."/>
            <person name="McPherson D."/>
            <person name="Merkulov G."/>
            <person name="Milshina N.V."/>
            <person name="Mobarry C."/>
            <person name="Morris J."/>
            <person name="Moshrefi A."/>
            <person name="Mount S.M."/>
            <person name="Moy M."/>
            <person name="Murphy B."/>
            <person name="Murphy L."/>
            <person name="Muzny D.M."/>
            <person name="Nelson D.L."/>
            <person name="Nelson D.R."/>
            <person name="Nelson K.A."/>
            <person name="Nixon K."/>
            <person name="Nusskern D.R."/>
            <person name="Pacleb J.M."/>
            <person name="Palazzolo M."/>
            <person name="Pittman G.S."/>
            <person name="Pan S."/>
            <person name="Pollard J."/>
            <person name="Puri V."/>
            <person name="Reese M.G."/>
            <person name="Reinert K."/>
            <person name="Remington K."/>
            <person name="Saunders R.D.C."/>
            <person name="Scheeler F."/>
            <person name="Shen H."/>
            <person name="Shue B.C."/>
            <person name="Siden-Kiamos I."/>
            <person name="Simpson M."/>
            <person name="Skupski M.P."/>
            <person name="Smith T.J."/>
            <person name="Spier E."/>
            <person name="Spradling A.C."/>
            <person name="Stapleton M."/>
            <person name="Strong R."/>
            <person name="Sun E."/>
            <person name="Svirskas R."/>
            <person name="Tector C."/>
            <person name="Turner R."/>
            <person name="Venter E."/>
            <person name="Wang A.H."/>
            <person name="Wang X."/>
            <person name="Wang Z.-Y."/>
            <person name="Wassarman D.A."/>
            <person name="Weinstock G.M."/>
            <person name="Weissenbach J."/>
            <person name="Williams S.M."/>
            <person name="Woodage T."/>
            <person name="Worley K.C."/>
            <person name="Wu D."/>
            <person name="Yang S."/>
            <person name="Yao Q.A."/>
            <person name="Ye J."/>
            <person name="Yeh R.-F."/>
            <person name="Zaveri J.S."/>
            <person name="Zhan M."/>
            <person name="Zhang G."/>
            <person name="Zhao Q."/>
            <person name="Zheng L."/>
            <person name="Zheng X.H."/>
            <person name="Zhong F.N."/>
            <person name="Zhong W."/>
            <person name="Zhou X."/>
            <person name="Zhu S.C."/>
            <person name="Zhu X."/>
            <person name="Smith H.O."/>
            <person name="Gibbs R.A."/>
            <person name="Myers E.W."/>
            <person name="Rubin G.M."/>
            <person name="Venter J.C."/>
        </authorList>
    </citation>
    <scope>NUCLEOTIDE SEQUENCE [LARGE SCALE GENOMIC DNA]</scope>
    <source>
        <strain>Berkeley</strain>
    </source>
</reference>
<reference key="2">
    <citation type="journal article" date="2002" name="Genome Biol.">
        <title>Annotation of the Drosophila melanogaster euchromatic genome: a systematic review.</title>
        <authorList>
            <person name="Misra S."/>
            <person name="Crosby M.A."/>
            <person name="Mungall C.J."/>
            <person name="Matthews B.B."/>
            <person name="Campbell K.S."/>
            <person name="Hradecky P."/>
            <person name="Huang Y."/>
            <person name="Kaminker J.S."/>
            <person name="Millburn G.H."/>
            <person name="Prochnik S.E."/>
            <person name="Smith C.D."/>
            <person name="Tupy J.L."/>
            <person name="Whitfield E.J."/>
            <person name="Bayraktaroglu L."/>
            <person name="Berman B.P."/>
            <person name="Bettencourt B.R."/>
            <person name="Celniker S.E."/>
            <person name="de Grey A.D.N.J."/>
            <person name="Drysdale R.A."/>
            <person name="Harris N.L."/>
            <person name="Richter J."/>
            <person name="Russo S."/>
            <person name="Schroeder A.J."/>
            <person name="Shu S.Q."/>
            <person name="Stapleton M."/>
            <person name="Yamada C."/>
            <person name="Ashburner M."/>
            <person name="Gelbart W.M."/>
            <person name="Rubin G.M."/>
            <person name="Lewis S.E."/>
        </authorList>
    </citation>
    <scope>GENOME REANNOTATION</scope>
    <source>
        <strain>Berkeley</strain>
    </source>
</reference>
<reference key="3">
    <citation type="journal article" date="2002" name="Genome Biol.">
        <title>A Drosophila full-length cDNA resource.</title>
        <authorList>
            <person name="Stapleton M."/>
            <person name="Carlson J.W."/>
            <person name="Brokstein P."/>
            <person name="Yu C."/>
            <person name="Champe M."/>
            <person name="George R.A."/>
            <person name="Guarin H."/>
            <person name="Kronmiller B."/>
            <person name="Pacleb J.M."/>
            <person name="Park S."/>
            <person name="Wan K.H."/>
            <person name="Rubin G.M."/>
            <person name="Celniker S.E."/>
        </authorList>
    </citation>
    <scope>NUCLEOTIDE SEQUENCE [LARGE SCALE MRNA]</scope>
    <source>
        <strain>Berkeley</strain>
        <tissue>Embryo</tissue>
    </source>
</reference>